<organism>
    <name type="scientific">Oncorhynchus nerka</name>
    <name type="common">Sockeye salmon</name>
    <name type="synonym">Salmo nerka</name>
    <dbReference type="NCBI Taxonomy" id="8023"/>
    <lineage>
        <taxon>Eukaryota</taxon>
        <taxon>Metazoa</taxon>
        <taxon>Chordata</taxon>
        <taxon>Craniata</taxon>
        <taxon>Vertebrata</taxon>
        <taxon>Euteleostomi</taxon>
        <taxon>Actinopterygii</taxon>
        <taxon>Neopterygii</taxon>
        <taxon>Teleostei</taxon>
        <taxon>Protacanthopterygii</taxon>
        <taxon>Salmoniformes</taxon>
        <taxon>Salmonidae</taxon>
        <taxon>Salmoninae</taxon>
        <taxon>Oncorhynchus</taxon>
    </lineage>
</organism>
<comment type="function">
    <text>Growth hormone plays an important role in growth control and is involved in the regulation of several anabolic processes. Implicated as an osmoregulatory substance important for seawater adaptation.</text>
</comment>
<comment type="subcellular location">
    <subcellularLocation>
        <location>Secreted</location>
    </subcellularLocation>
</comment>
<comment type="similarity">
    <text evidence="2">Belongs to the somatotropin/prolactin family.</text>
</comment>
<feature type="signal peptide" evidence="1">
    <location>
        <begin position="1"/>
        <end position="22"/>
    </location>
</feature>
<feature type="chain" id="PRO_0000033038" description="Somatotropin-1">
    <location>
        <begin position="23"/>
        <end position="210"/>
    </location>
</feature>
<feature type="binding site" evidence="1">
    <location>
        <position position="38"/>
    </location>
    <ligand>
        <name>Zn(2+)</name>
        <dbReference type="ChEBI" id="CHEBI:29105"/>
    </ligand>
</feature>
<feature type="binding site" evidence="1">
    <location>
        <position position="192"/>
    </location>
    <ligand>
        <name>Zn(2+)</name>
        <dbReference type="ChEBI" id="CHEBI:29105"/>
    </ligand>
</feature>
<feature type="disulfide bond" evidence="1">
    <location>
        <begin position="71"/>
        <end position="183"/>
    </location>
</feature>
<feature type="disulfide bond" evidence="1">
    <location>
        <begin position="200"/>
        <end position="208"/>
    </location>
</feature>
<evidence type="ECO:0000250" key="1"/>
<evidence type="ECO:0000305" key="2"/>
<proteinExistence type="inferred from homology"/>
<accession>Q91222</accession>
<keyword id="KW-1015">Disulfide bond</keyword>
<keyword id="KW-0372">Hormone</keyword>
<keyword id="KW-0479">Metal-binding</keyword>
<keyword id="KW-0964">Secreted</keyword>
<keyword id="KW-0732">Signal</keyword>
<keyword id="KW-0862">Zinc</keyword>
<reference key="1">
    <citation type="journal article" date="1993" name="Can. J. Fish. Aquat. Sci.">
        <title>Sequence of sockeye salmon type 1 and 2 growth hormone genes and the relationship of rainbow trout with Atlantic and Pacific salmon.</title>
        <authorList>
            <person name="Devlin R.H."/>
        </authorList>
    </citation>
    <scope>NUCLEOTIDE SEQUENCE [GENOMIC DNA]</scope>
    <source>
        <tissue>Liver</tissue>
    </source>
</reference>
<gene>
    <name type="primary">gh1</name>
</gene>
<protein>
    <recommendedName>
        <fullName>Somatotropin-1</fullName>
    </recommendedName>
    <alternativeName>
        <fullName>Growth hormone I</fullName>
    </alternativeName>
    <alternativeName>
        <fullName>Somatotropin I</fullName>
    </alternativeName>
</protein>
<name>SOMA1_ONCNE</name>
<sequence>MGQVFLLMPVLLASCFLSQGAAIENQRLFNIAVSRVQHLHLLAQKMFNDFDGTLLPDERRQLNKIFLLDFCISDSIVSPVDKHETQKSSVLKLLHISFRLIESWEYPSQTLIISNSLMVRNANQISEKLSDLKVGINLLITGSQDGVLSLDDNDSQHLPPYGNYYQNLGGEGNVRRNYELLACFKKDMHKVETYLTVAKCRKSLEANCTL</sequence>
<dbReference type="EMBL" id="U14551">
    <property type="protein sequence ID" value="AAA50757.1"/>
    <property type="molecule type" value="Genomic_DNA"/>
</dbReference>
<dbReference type="SMR" id="Q91222"/>
<dbReference type="GO" id="GO:0005615">
    <property type="term" value="C:extracellular space"/>
    <property type="evidence" value="ECO:0007669"/>
    <property type="project" value="InterPro"/>
</dbReference>
<dbReference type="GO" id="GO:0070186">
    <property type="term" value="F:growth hormone activity"/>
    <property type="evidence" value="ECO:0007669"/>
    <property type="project" value="TreeGrafter"/>
</dbReference>
<dbReference type="GO" id="GO:0005131">
    <property type="term" value="F:growth hormone receptor binding"/>
    <property type="evidence" value="ECO:0007669"/>
    <property type="project" value="InterPro"/>
</dbReference>
<dbReference type="GO" id="GO:0046872">
    <property type="term" value="F:metal ion binding"/>
    <property type="evidence" value="ECO:0007669"/>
    <property type="project" value="UniProtKB-KW"/>
</dbReference>
<dbReference type="GO" id="GO:0048513">
    <property type="term" value="P:animal organ development"/>
    <property type="evidence" value="ECO:0007669"/>
    <property type="project" value="TreeGrafter"/>
</dbReference>
<dbReference type="GO" id="GO:0055074">
    <property type="term" value="P:calcium ion homeostasis"/>
    <property type="evidence" value="ECO:0000250"/>
    <property type="project" value="AgBase"/>
</dbReference>
<dbReference type="GO" id="GO:0060396">
    <property type="term" value="P:growth hormone receptor signaling pathway"/>
    <property type="evidence" value="ECO:0007669"/>
    <property type="project" value="TreeGrafter"/>
</dbReference>
<dbReference type="GO" id="GO:0042538">
    <property type="term" value="P:hyperosmotic salinity response"/>
    <property type="evidence" value="ECO:0000250"/>
    <property type="project" value="AgBase"/>
</dbReference>
<dbReference type="GO" id="GO:0010960">
    <property type="term" value="P:magnesium ion homeostasis"/>
    <property type="evidence" value="ECO:0000250"/>
    <property type="project" value="AgBase"/>
</dbReference>
<dbReference type="GO" id="GO:0045927">
    <property type="term" value="P:positive regulation of growth"/>
    <property type="evidence" value="ECO:0007669"/>
    <property type="project" value="TreeGrafter"/>
</dbReference>
<dbReference type="GO" id="GO:0050766">
    <property type="term" value="P:positive regulation of phagocytosis"/>
    <property type="evidence" value="ECO:0000250"/>
    <property type="project" value="AgBase"/>
</dbReference>
<dbReference type="GO" id="GO:0046427">
    <property type="term" value="P:positive regulation of receptor signaling pathway via JAK-STAT"/>
    <property type="evidence" value="ECO:0007669"/>
    <property type="project" value="TreeGrafter"/>
</dbReference>
<dbReference type="GO" id="GO:0032930">
    <property type="term" value="P:positive regulation of superoxide anion generation"/>
    <property type="evidence" value="ECO:0000250"/>
    <property type="project" value="AgBase"/>
</dbReference>
<dbReference type="GO" id="GO:0002637">
    <property type="term" value="P:regulation of immunoglobulin production"/>
    <property type="evidence" value="ECO:0000250"/>
    <property type="project" value="AgBase"/>
</dbReference>
<dbReference type="GO" id="GO:0031667">
    <property type="term" value="P:response to nutrient levels"/>
    <property type="evidence" value="ECO:0007669"/>
    <property type="project" value="TreeGrafter"/>
</dbReference>
<dbReference type="GO" id="GO:0055078">
    <property type="term" value="P:sodium ion homeostasis"/>
    <property type="evidence" value="ECO:0000250"/>
    <property type="project" value="AgBase"/>
</dbReference>
<dbReference type="CDD" id="cd10285">
    <property type="entry name" value="somatotropin_like"/>
    <property type="match status" value="1"/>
</dbReference>
<dbReference type="FunFam" id="1.20.1250.10:FF:000009">
    <property type="entry name" value="Growth hormone"/>
    <property type="match status" value="1"/>
</dbReference>
<dbReference type="Gene3D" id="1.20.1250.10">
    <property type="match status" value="1"/>
</dbReference>
<dbReference type="InterPro" id="IPR009079">
    <property type="entry name" value="4_helix_cytokine-like_core"/>
</dbReference>
<dbReference type="InterPro" id="IPR034975">
    <property type="entry name" value="Somatotropin"/>
</dbReference>
<dbReference type="InterPro" id="IPR001400">
    <property type="entry name" value="Somatotropin/Prolactin"/>
</dbReference>
<dbReference type="InterPro" id="IPR018116">
    <property type="entry name" value="Somatotropin_CS"/>
</dbReference>
<dbReference type="PANTHER" id="PTHR11417:SF2">
    <property type="entry name" value="SOMATOTROPIN"/>
    <property type="match status" value="1"/>
</dbReference>
<dbReference type="PANTHER" id="PTHR11417">
    <property type="entry name" value="SOMATOTROPIN,PROLACTIN"/>
    <property type="match status" value="1"/>
</dbReference>
<dbReference type="Pfam" id="PF00103">
    <property type="entry name" value="Hormone_1"/>
    <property type="match status" value="1"/>
</dbReference>
<dbReference type="PRINTS" id="PR00836">
    <property type="entry name" value="SOMATOTROPIN"/>
</dbReference>
<dbReference type="SUPFAM" id="SSF47266">
    <property type="entry name" value="4-helical cytokines"/>
    <property type="match status" value="1"/>
</dbReference>
<dbReference type="PROSITE" id="PS00266">
    <property type="entry name" value="SOMATOTROPIN_1"/>
    <property type="match status" value="1"/>
</dbReference>
<dbReference type="PROSITE" id="PS00338">
    <property type="entry name" value="SOMATOTROPIN_2"/>
    <property type="match status" value="1"/>
</dbReference>